<feature type="chain" id="PRO_1000091932" description="DNA-directed RNA polymerase subunit alpha">
    <location>
        <begin position="1"/>
        <end position="328"/>
    </location>
</feature>
<feature type="region of interest" description="Alpha N-terminal domain (alpha-NTD)" evidence="1">
    <location>
        <begin position="1"/>
        <end position="231"/>
    </location>
</feature>
<feature type="region of interest" description="Alpha C-terminal domain (alpha-CTD)" evidence="1">
    <location>
        <begin position="252"/>
        <end position="328"/>
    </location>
</feature>
<protein>
    <recommendedName>
        <fullName evidence="1">DNA-directed RNA polymerase subunit alpha</fullName>
        <shortName evidence="1">RNAP subunit alpha</shortName>
        <ecNumber evidence="1">2.7.7.6</ecNumber>
    </recommendedName>
    <alternativeName>
        <fullName evidence="1">RNA polymerase subunit alpha</fullName>
    </alternativeName>
    <alternativeName>
        <fullName evidence="1">Transcriptase subunit alpha</fullName>
    </alternativeName>
</protein>
<organism>
    <name type="scientific">Chlorobium limicola (strain DSM 245 / NBRC 103803 / 6330)</name>
    <dbReference type="NCBI Taxonomy" id="290315"/>
    <lineage>
        <taxon>Bacteria</taxon>
        <taxon>Pseudomonadati</taxon>
        <taxon>Chlorobiota</taxon>
        <taxon>Chlorobiia</taxon>
        <taxon>Chlorobiales</taxon>
        <taxon>Chlorobiaceae</taxon>
        <taxon>Chlorobium/Pelodictyon group</taxon>
        <taxon>Chlorobium</taxon>
    </lineage>
</organism>
<keyword id="KW-0240">DNA-directed RNA polymerase</keyword>
<keyword id="KW-0548">Nucleotidyltransferase</keyword>
<keyword id="KW-0804">Transcription</keyword>
<keyword id="KW-0808">Transferase</keyword>
<accession>B3EGW3</accession>
<sequence length="328" mass="37266">MIYQMQMPAKIEVDEATHTDRFGRFVAQPLERGYGVTLGNVMRRALLASLPGTAITGLKIDGVFHEFSTINGVREDVPEIVLNLKKVRFRSNCKRNCKTSLVLNGQKEFTAGDIIAQEGEFEVLNKDLHIATVNEGATLKIDIFVGRGRGYLPSEENRPDGMPIGFIAIDAIFTPIRNVKFTVENTRVGQRTDYEKMILDVETDGSITPDDSISLAGKIINEHVTFFADFSPTEEEFTEEEFKQQDDEFENMRKLFNTKIEDLDLSVRSHNCLRLAEIDTIGDLVSRKEDELLNYKNFGKKSLTELKEQLEKFDLKFGMDITKYQMKG</sequence>
<evidence type="ECO:0000255" key="1">
    <source>
        <dbReference type="HAMAP-Rule" id="MF_00059"/>
    </source>
</evidence>
<name>RPOA_CHLL2</name>
<reference key="1">
    <citation type="submission" date="2008-05" db="EMBL/GenBank/DDBJ databases">
        <title>Complete sequence of Chlorobium limicola DSM 245.</title>
        <authorList>
            <consortium name="US DOE Joint Genome Institute"/>
            <person name="Lucas S."/>
            <person name="Copeland A."/>
            <person name="Lapidus A."/>
            <person name="Glavina del Rio T."/>
            <person name="Dalin E."/>
            <person name="Tice H."/>
            <person name="Bruce D."/>
            <person name="Goodwin L."/>
            <person name="Pitluck S."/>
            <person name="Schmutz J."/>
            <person name="Larimer F."/>
            <person name="Land M."/>
            <person name="Hauser L."/>
            <person name="Kyrpides N."/>
            <person name="Ovchinnikova G."/>
            <person name="Zhao F."/>
            <person name="Li T."/>
            <person name="Liu Z."/>
            <person name="Overmann J."/>
            <person name="Bryant D.A."/>
            <person name="Richardson P."/>
        </authorList>
    </citation>
    <scope>NUCLEOTIDE SEQUENCE [LARGE SCALE GENOMIC DNA]</scope>
    <source>
        <strain>DSM 245 / NBRC 103803 / 6330</strain>
    </source>
</reference>
<dbReference type="EC" id="2.7.7.6" evidence="1"/>
<dbReference type="EMBL" id="CP001097">
    <property type="protein sequence ID" value="ACD91226.1"/>
    <property type="molecule type" value="Genomic_DNA"/>
</dbReference>
<dbReference type="RefSeq" id="WP_012467094.1">
    <property type="nucleotide sequence ID" value="NC_010803.1"/>
</dbReference>
<dbReference type="SMR" id="B3EGW3"/>
<dbReference type="STRING" id="290315.Clim_2202"/>
<dbReference type="KEGG" id="cli:Clim_2202"/>
<dbReference type="eggNOG" id="COG0202">
    <property type="taxonomic scope" value="Bacteria"/>
</dbReference>
<dbReference type="HOGENOM" id="CLU_053084_0_1_10"/>
<dbReference type="OrthoDB" id="9805706at2"/>
<dbReference type="Proteomes" id="UP000008841">
    <property type="component" value="Chromosome"/>
</dbReference>
<dbReference type="GO" id="GO:0005737">
    <property type="term" value="C:cytoplasm"/>
    <property type="evidence" value="ECO:0007669"/>
    <property type="project" value="UniProtKB-ARBA"/>
</dbReference>
<dbReference type="GO" id="GO:0000428">
    <property type="term" value="C:DNA-directed RNA polymerase complex"/>
    <property type="evidence" value="ECO:0007669"/>
    <property type="project" value="UniProtKB-KW"/>
</dbReference>
<dbReference type="GO" id="GO:0003677">
    <property type="term" value="F:DNA binding"/>
    <property type="evidence" value="ECO:0007669"/>
    <property type="project" value="UniProtKB-UniRule"/>
</dbReference>
<dbReference type="GO" id="GO:0003899">
    <property type="term" value="F:DNA-directed RNA polymerase activity"/>
    <property type="evidence" value="ECO:0007669"/>
    <property type="project" value="UniProtKB-UniRule"/>
</dbReference>
<dbReference type="GO" id="GO:0046983">
    <property type="term" value="F:protein dimerization activity"/>
    <property type="evidence" value="ECO:0007669"/>
    <property type="project" value="InterPro"/>
</dbReference>
<dbReference type="GO" id="GO:0006351">
    <property type="term" value="P:DNA-templated transcription"/>
    <property type="evidence" value="ECO:0007669"/>
    <property type="project" value="UniProtKB-UniRule"/>
</dbReference>
<dbReference type="CDD" id="cd06928">
    <property type="entry name" value="RNAP_alpha_NTD"/>
    <property type="match status" value="1"/>
</dbReference>
<dbReference type="FunFam" id="2.170.120.12:FF:000001">
    <property type="entry name" value="DNA-directed RNA polymerase subunit alpha"/>
    <property type="match status" value="1"/>
</dbReference>
<dbReference type="Gene3D" id="1.10.150.20">
    <property type="entry name" value="5' to 3' exonuclease, C-terminal subdomain"/>
    <property type="match status" value="1"/>
</dbReference>
<dbReference type="Gene3D" id="2.170.120.12">
    <property type="entry name" value="DNA-directed RNA polymerase, insert domain"/>
    <property type="match status" value="1"/>
</dbReference>
<dbReference type="Gene3D" id="3.30.1360.10">
    <property type="entry name" value="RNA polymerase, RBP11-like subunit"/>
    <property type="match status" value="1"/>
</dbReference>
<dbReference type="HAMAP" id="MF_00059">
    <property type="entry name" value="RNApol_bact_RpoA"/>
    <property type="match status" value="1"/>
</dbReference>
<dbReference type="InterPro" id="IPR011262">
    <property type="entry name" value="DNA-dir_RNA_pol_insert"/>
</dbReference>
<dbReference type="InterPro" id="IPR011263">
    <property type="entry name" value="DNA-dir_RNA_pol_RpoA/D/Rpb3"/>
</dbReference>
<dbReference type="InterPro" id="IPR011773">
    <property type="entry name" value="DNA-dir_RpoA"/>
</dbReference>
<dbReference type="InterPro" id="IPR036603">
    <property type="entry name" value="RBP11-like"/>
</dbReference>
<dbReference type="InterPro" id="IPR011260">
    <property type="entry name" value="RNAP_asu_C"/>
</dbReference>
<dbReference type="InterPro" id="IPR036643">
    <property type="entry name" value="RNApol_insert_sf"/>
</dbReference>
<dbReference type="NCBIfam" id="NF003513">
    <property type="entry name" value="PRK05182.1-2"/>
    <property type="match status" value="1"/>
</dbReference>
<dbReference type="NCBIfam" id="NF003519">
    <property type="entry name" value="PRK05182.2-5"/>
    <property type="match status" value="1"/>
</dbReference>
<dbReference type="NCBIfam" id="TIGR02027">
    <property type="entry name" value="rpoA"/>
    <property type="match status" value="1"/>
</dbReference>
<dbReference type="Pfam" id="PF01000">
    <property type="entry name" value="RNA_pol_A_bac"/>
    <property type="match status" value="1"/>
</dbReference>
<dbReference type="Pfam" id="PF03118">
    <property type="entry name" value="RNA_pol_A_CTD"/>
    <property type="match status" value="1"/>
</dbReference>
<dbReference type="Pfam" id="PF01193">
    <property type="entry name" value="RNA_pol_L"/>
    <property type="match status" value="1"/>
</dbReference>
<dbReference type="SMART" id="SM00662">
    <property type="entry name" value="RPOLD"/>
    <property type="match status" value="1"/>
</dbReference>
<dbReference type="SUPFAM" id="SSF47789">
    <property type="entry name" value="C-terminal domain of RNA polymerase alpha subunit"/>
    <property type="match status" value="1"/>
</dbReference>
<dbReference type="SUPFAM" id="SSF56553">
    <property type="entry name" value="Insert subdomain of RNA polymerase alpha subunit"/>
    <property type="match status" value="1"/>
</dbReference>
<dbReference type="SUPFAM" id="SSF55257">
    <property type="entry name" value="RBP11-like subunits of RNA polymerase"/>
    <property type="match status" value="1"/>
</dbReference>
<gene>
    <name evidence="1" type="primary">rpoA</name>
    <name type="ordered locus">Clim_2202</name>
</gene>
<proteinExistence type="inferred from homology"/>
<comment type="function">
    <text evidence="1">DNA-dependent RNA polymerase catalyzes the transcription of DNA into RNA using the four ribonucleoside triphosphates as substrates.</text>
</comment>
<comment type="catalytic activity">
    <reaction evidence="1">
        <text>RNA(n) + a ribonucleoside 5'-triphosphate = RNA(n+1) + diphosphate</text>
        <dbReference type="Rhea" id="RHEA:21248"/>
        <dbReference type="Rhea" id="RHEA-COMP:14527"/>
        <dbReference type="Rhea" id="RHEA-COMP:17342"/>
        <dbReference type="ChEBI" id="CHEBI:33019"/>
        <dbReference type="ChEBI" id="CHEBI:61557"/>
        <dbReference type="ChEBI" id="CHEBI:140395"/>
        <dbReference type="EC" id="2.7.7.6"/>
    </reaction>
</comment>
<comment type="subunit">
    <text evidence="1">Homodimer. The RNAP catalytic core consists of 2 alpha, 1 beta, 1 beta' and 1 omega subunit. When a sigma factor is associated with the core the holoenzyme is formed, which can initiate transcription.</text>
</comment>
<comment type="domain">
    <text evidence="1">The N-terminal domain is essential for RNAP assembly and basal transcription, whereas the C-terminal domain is involved in interaction with transcriptional regulators and with upstream promoter elements.</text>
</comment>
<comment type="similarity">
    <text evidence="1">Belongs to the RNA polymerase alpha chain family.</text>
</comment>